<comment type="function">
    <text evidence="3">Alternative splicing (AS) regulator that binds to specific mRNAs and modulates auxin effects on the transcriptome. Displaced from its targets upon binding to AS competitor long non-coding RNA (ASCO-RNA).</text>
</comment>
<comment type="subcellular location">
    <subcellularLocation>
        <location evidence="3">Nucleus speckle</location>
    </subcellularLocation>
    <text evidence="3">Relocalizes to cytoplasmic bodies in trichoblast cells containing root hairs or when coexpressed with Medicago enod40 RNA.</text>
</comment>
<comment type="alternative products">
    <event type="alternative splicing"/>
    <isoform>
        <id>A1A6K6-1</id>
        <name>1</name>
        <sequence type="displayed"/>
    </isoform>
    <isoform>
        <id>A1A6K6-2</id>
        <name>2</name>
        <sequence type="described" ref="VSP_057907"/>
    </isoform>
</comment>
<comment type="tissue specificity">
    <text evidence="3">Expressed in root meristems, lateral root primordia and root vascular tissues.</text>
</comment>
<comment type="induction">
    <text evidence="3">Constitutively expressed.</text>
</comment>
<comment type="disruption phenotype">
    <text evidence="3">No visible phenotype. Nsra and nsrb double mutants are less sensitive to auxin.</text>
</comment>
<comment type="sequence caution" evidence="5">
    <conflict type="erroneous gene model prediction">
        <sequence resource="EMBL-CDS" id="AAC00617"/>
    </conflict>
</comment>
<comment type="sequence caution" evidence="5">
    <conflict type="erroneous initiation">
        <sequence resource="EMBL-CDS" id="BAC42194"/>
    </conflict>
    <text>Truncated N-terminus.</text>
</comment>
<sequence>MADGYWNQQRQQHHPPGGPMKRPRSDFEAPSSTMTIGHGGGYYPRDEDLDVPDTRTIGSAYDRYLQSVQSGEGGSVSMGRSGGGGGGGGGNVQTIDDFMLRRGGVLPLDHGPNGHTIGFDPPEPVGRRNLPSDASNTLYVEGLPSNCSRREVAHIFRPFVGYREVRLVTKDSKHRNGDPIVLCFVDFTNPACAATALSALQGYRMDENESDSKFLRLQFSRKPGSRPGQRGRR</sequence>
<proteinExistence type="evidence at transcript level"/>
<keyword id="KW-0025">Alternative splicing</keyword>
<keyword id="KW-0539">Nucleus</keyword>
<keyword id="KW-1185">Reference proteome</keyword>
<keyword id="KW-0694">RNA-binding</keyword>
<feature type="chain" id="PRO_0000434146" description="Nuclear speckle RNA-binding protein A">
    <location>
        <begin position="1"/>
        <end position="233"/>
    </location>
</feature>
<feature type="domain" description="RRM" evidence="1">
    <location>
        <begin position="136"/>
        <end position="222"/>
    </location>
</feature>
<feature type="region of interest" description="Disordered" evidence="2">
    <location>
        <begin position="1"/>
        <end position="54"/>
    </location>
</feature>
<feature type="region of interest" description="Disordered" evidence="2">
    <location>
        <begin position="68"/>
        <end position="92"/>
    </location>
</feature>
<feature type="region of interest" description="Disordered" evidence="2">
    <location>
        <begin position="214"/>
        <end position="233"/>
    </location>
</feature>
<feature type="compositionally biased region" description="Gly residues" evidence="2">
    <location>
        <begin position="71"/>
        <end position="91"/>
    </location>
</feature>
<feature type="splice variant" id="VSP_057907" description="In isoform 2.">
    <location>
        <begin position="28"/>
        <end position="81"/>
    </location>
</feature>
<reference key="1">
    <citation type="journal article" date="2000" name="Nature">
        <title>Sequence and analysis of chromosome 1 of the plant Arabidopsis thaliana.</title>
        <authorList>
            <person name="Theologis A."/>
            <person name="Ecker J.R."/>
            <person name="Palm C.J."/>
            <person name="Federspiel N.A."/>
            <person name="Kaul S."/>
            <person name="White O."/>
            <person name="Alonso J."/>
            <person name="Altafi H."/>
            <person name="Araujo R."/>
            <person name="Bowman C.L."/>
            <person name="Brooks S.Y."/>
            <person name="Buehler E."/>
            <person name="Chan A."/>
            <person name="Chao Q."/>
            <person name="Chen H."/>
            <person name="Cheuk R.F."/>
            <person name="Chin C.W."/>
            <person name="Chung M.K."/>
            <person name="Conn L."/>
            <person name="Conway A.B."/>
            <person name="Conway A.R."/>
            <person name="Creasy T.H."/>
            <person name="Dewar K."/>
            <person name="Dunn P."/>
            <person name="Etgu P."/>
            <person name="Feldblyum T.V."/>
            <person name="Feng J.-D."/>
            <person name="Fong B."/>
            <person name="Fujii C.Y."/>
            <person name="Gill J.E."/>
            <person name="Goldsmith A.D."/>
            <person name="Haas B."/>
            <person name="Hansen N.F."/>
            <person name="Hughes B."/>
            <person name="Huizar L."/>
            <person name="Hunter J.L."/>
            <person name="Jenkins J."/>
            <person name="Johnson-Hopson C."/>
            <person name="Khan S."/>
            <person name="Khaykin E."/>
            <person name="Kim C.J."/>
            <person name="Koo H.L."/>
            <person name="Kremenetskaia I."/>
            <person name="Kurtz D.B."/>
            <person name="Kwan A."/>
            <person name="Lam B."/>
            <person name="Langin-Hooper S."/>
            <person name="Lee A."/>
            <person name="Lee J.M."/>
            <person name="Lenz C.A."/>
            <person name="Li J.H."/>
            <person name="Li Y.-P."/>
            <person name="Lin X."/>
            <person name="Liu S.X."/>
            <person name="Liu Z.A."/>
            <person name="Luros J.S."/>
            <person name="Maiti R."/>
            <person name="Marziali A."/>
            <person name="Militscher J."/>
            <person name="Miranda M."/>
            <person name="Nguyen M."/>
            <person name="Nierman W.C."/>
            <person name="Osborne B.I."/>
            <person name="Pai G."/>
            <person name="Peterson J."/>
            <person name="Pham P.K."/>
            <person name="Rizzo M."/>
            <person name="Rooney T."/>
            <person name="Rowley D."/>
            <person name="Sakano H."/>
            <person name="Salzberg S.L."/>
            <person name="Schwartz J.R."/>
            <person name="Shinn P."/>
            <person name="Southwick A.M."/>
            <person name="Sun H."/>
            <person name="Tallon L.J."/>
            <person name="Tambunga G."/>
            <person name="Toriumi M.J."/>
            <person name="Town C.D."/>
            <person name="Utterback T."/>
            <person name="Van Aken S."/>
            <person name="Vaysberg M."/>
            <person name="Vysotskaia V.S."/>
            <person name="Walker M."/>
            <person name="Wu D."/>
            <person name="Yu G."/>
            <person name="Fraser C.M."/>
            <person name="Venter J.C."/>
            <person name="Davis R.W."/>
        </authorList>
    </citation>
    <scope>NUCLEOTIDE SEQUENCE [LARGE SCALE GENOMIC DNA]</scope>
    <source>
        <strain>cv. Columbia</strain>
    </source>
</reference>
<reference key="2">
    <citation type="journal article" date="2017" name="Plant J.">
        <title>Araport11: a complete reannotation of the Arabidopsis thaliana reference genome.</title>
        <authorList>
            <person name="Cheng C.Y."/>
            <person name="Krishnakumar V."/>
            <person name="Chan A.P."/>
            <person name="Thibaud-Nissen F."/>
            <person name="Schobel S."/>
            <person name="Town C.D."/>
        </authorList>
    </citation>
    <scope>GENOME REANNOTATION</scope>
    <source>
        <strain>cv. Columbia</strain>
    </source>
</reference>
<reference key="3">
    <citation type="submission" date="2006-12" db="EMBL/GenBank/DDBJ databases">
        <title>Arabidopsis ORF clones.</title>
        <authorList>
            <person name="Bautista V.R."/>
            <person name="Kim C.J."/>
            <person name="Chen H."/>
            <person name="Quinitio C."/>
            <person name="Ecker J.R."/>
        </authorList>
    </citation>
    <scope>NUCLEOTIDE SEQUENCE [LARGE SCALE MRNA]</scope>
</reference>
<reference key="4">
    <citation type="journal article" date="2002" name="Science">
        <title>Functional annotation of a full-length Arabidopsis cDNA collection.</title>
        <authorList>
            <person name="Seki M."/>
            <person name="Narusaka M."/>
            <person name="Kamiya A."/>
            <person name="Ishida J."/>
            <person name="Satou M."/>
            <person name="Sakurai T."/>
            <person name="Nakajima M."/>
            <person name="Enju A."/>
            <person name="Akiyama K."/>
            <person name="Oono Y."/>
            <person name="Muramatsu M."/>
            <person name="Hayashizaki Y."/>
            <person name="Kawai J."/>
            <person name="Carninci P."/>
            <person name="Itoh M."/>
            <person name="Ishii Y."/>
            <person name="Arakawa T."/>
            <person name="Shibata K."/>
            <person name="Shinagawa A."/>
            <person name="Shinozaki K."/>
        </authorList>
    </citation>
    <scope>NUCLEOTIDE SEQUENCE [LARGE SCALE MRNA] OF 61-233</scope>
    <source>
        <strain>cv. Columbia</strain>
    </source>
</reference>
<reference key="5">
    <citation type="journal article" date="2014" name="Dev. Cell">
        <title>Long noncoding RNA modulates alternative splicing regulators in Arabidopsis.</title>
        <authorList>
            <person name="Bardou F."/>
            <person name="Ariel F."/>
            <person name="Simpson C.G."/>
            <person name="Romero-Barrios N."/>
            <person name="Laporte P."/>
            <person name="Balzergue S."/>
            <person name="Brown J.W."/>
            <person name="Crespi M."/>
        </authorList>
    </citation>
    <scope>FUNCTION</scope>
    <scope>SUBCELLULAR LOCATION</scope>
    <scope>TISSUE SPECIFICITY</scope>
    <scope>INDUCTION</scope>
    <scope>DISRUPTION PHENOTYPE</scope>
</reference>
<protein>
    <recommendedName>
        <fullName evidence="4">Nuclear speckle RNA-binding protein A</fullName>
        <shortName evidence="4">AtNSRA</shortName>
    </recommendedName>
</protein>
<name>NSRA_ARATH</name>
<organism evidence="8">
    <name type="scientific">Arabidopsis thaliana</name>
    <name type="common">Mouse-ear cress</name>
    <dbReference type="NCBI Taxonomy" id="3702"/>
    <lineage>
        <taxon>Eukaryota</taxon>
        <taxon>Viridiplantae</taxon>
        <taxon>Streptophyta</taxon>
        <taxon>Embryophyta</taxon>
        <taxon>Tracheophyta</taxon>
        <taxon>Spermatophyta</taxon>
        <taxon>Magnoliopsida</taxon>
        <taxon>eudicotyledons</taxon>
        <taxon>Gunneridae</taxon>
        <taxon>Pentapetalae</taxon>
        <taxon>rosids</taxon>
        <taxon>malvids</taxon>
        <taxon>Brassicales</taxon>
        <taxon>Brassicaceae</taxon>
        <taxon>Camelineae</taxon>
        <taxon>Arabidopsis</taxon>
    </lineage>
</organism>
<dbReference type="EMBL" id="AC002291">
    <property type="protein sequence ID" value="AAC00617.1"/>
    <property type="status" value="ALT_SEQ"/>
    <property type="molecule type" value="Genomic_DNA"/>
</dbReference>
<dbReference type="EMBL" id="CP002684">
    <property type="protein sequence ID" value="AEE35906.1"/>
    <property type="molecule type" value="Genomic_DNA"/>
</dbReference>
<dbReference type="EMBL" id="CP002684">
    <property type="protein sequence ID" value="AEE35907.1"/>
    <property type="molecule type" value="Genomic_DNA"/>
</dbReference>
<dbReference type="EMBL" id="BT029526">
    <property type="protein sequence ID" value="ABL66782.1"/>
    <property type="molecule type" value="mRNA"/>
</dbReference>
<dbReference type="EMBL" id="AK117533">
    <property type="protein sequence ID" value="BAC42194.1"/>
    <property type="status" value="ALT_INIT"/>
    <property type="molecule type" value="mRNA"/>
</dbReference>
<dbReference type="PIR" id="C96798">
    <property type="entry name" value="C96798"/>
</dbReference>
<dbReference type="RefSeq" id="NP_001185414.1">
    <molecule id="A1A6K6-2"/>
    <property type="nucleotide sequence ID" value="NM_001198485.1"/>
</dbReference>
<dbReference type="RefSeq" id="NP_177820.2">
    <molecule id="A1A6K6-1"/>
    <property type="nucleotide sequence ID" value="NM_106345.4"/>
</dbReference>
<dbReference type="SMR" id="A1A6K6"/>
<dbReference type="FunCoup" id="A1A6K6">
    <property type="interactions" value="815"/>
</dbReference>
<dbReference type="STRING" id="3702.A1A6K6"/>
<dbReference type="GlyGen" id="A1A6K6">
    <property type="glycosylation" value="2 sites, 1 O-linked glycan (2 sites)"/>
</dbReference>
<dbReference type="PaxDb" id="3702-AT1G76940.1"/>
<dbReference type="ProteomicsDB" id="249072">
    <molecule id="A1A6K6-1"/>
</dbReference>
<dbReference type="EnsemblPlants" id="AT1G76940.1">
    <molecule id="A1A6K6-1"/>
    <property type="protein sequence ID" value="AT1G76940.1"/>
    <property type="gene ID" value="AT1G76940"/>
</dbReference>
<dbReference type="EnsemblPlants" id="AT1G76940.2">
    <molecule id="A1A6K6-2"/>
    <property type="protein sequence ID" value="AT1G76940.2"/>
    <property type="gene ID" value="AT1G76940"/>
</dbReference>
<dbReference type="GeneID" id="844029"/>
<dbReference type="Gramene" id="AT1G76940.1">
    <molecule id="A1A6K6-1"/>
    <property type="protein sequence ID" value="AT1G76940.1"/>
    <property type="gene ID" value="AT1G76940"/>
</dbReference>
<dbReference type="Gramene" id="AT1G76940.2">
    <molecule id="A1A6K6-2"/>
    <property type="protein sequence ID" value="AT1G76940.2"/>
    <property type="gene ID" value="AT1G76940"/>
</dbReference>
<dbReference type="KEGG" id="ath:AT1G76940"/>
<dbReference type="Araport" id="AT1G76940"/>
<dbReference type="TAIR" id="AT1G76940">
    <property type="gene designation" value="NSRA"/>
</dbReference>
<dbReference type="eggNOG" id="ENOG502S9VX">
    <property type="taxonomic scope" value="Eukaryota"/>
</dbReference>
<dbReference type="HOGENOM" id="CLU_078642_1_1_1"/>
<dbReference type="InParanoid" id="A1A6K6"/>
<dbReference type="OMA" id="GHELLNY"/>
<dbReference type="PhylomeDB" id="A1A6K6"/>
<dbReference type="CD-CODE" id="4299E36E">
    <property type="entry name" value="Nucleolus"/>
</dbReference>
<dbReference type="PRO" id="PR:A1A6K6"/>
<dbReference type="Proteomes" id="UP000006548">
    <property type="component" value="Chromosome 1"/>
</dbReference>
<dbReference type="ExpressionAtlas" id="A1A6K6">
    <property type="expression patterns" value="baseline and differential"/>
</dbReference>
<dbReference type="GO" id="GO:0016607">
    <property type="term" value="C:nuclear speck"/>
    <property type="evidence" value="ECO:0007669"/>
    <property type="project" value="UniProtKB-SubCell"/>
</dbReference>
<dbReference type="GO" id="GO:0003723">
    <property type="term" value="F:RNA binding"/>
    <property type="evidence" value="ECO:0007669"/>
    <property type="project" value="UniProtKB-KW"/>
</dbReference>
<dbReference type="CDD" id="cd21618">
    <property type="entry name" value="RRM_AtNSRA_like"/>
    <property type="match status" value="1"/>
</dbReference>
<dbReference type="Gene3D" id="3.30.70.330">
    <property type="match status" value="1"/>
</dbReference>
<dbReference type="InterPro" id="IPR012677">
    <property type="entry name" value="Nucleotide-bd_a/b_plait_sf"/>
</dbReference>
<dbReference type="InterPro" id="IPR035979">
    <property type="entry name" value="RBD_domain_sf"/>
</dbReference>
<dbReference type="InterPro" id="IPR000504">
    <property type="entry name" value="RRM_dom"/>
</dbReference>
<dbReference type="PANTHER" id="PTHR10501">
    <property type="entry name" value="U1 SMALL NUCLEAR RIBONUCLEOPROTEIN A/U2 SMALL NUCLEAR RIBONUCLEOPROTEIN B"/>
    <property type="match status" value="1"/>
</dbReference>
<dbReference type="Pfam" id="PF00076">
    <property type="entry name" value="RRM_1"/>
    <property type="match status" value="1"/>
</dbReference>
<dbReference type="SMART" id="SM00360">
    <property type="entry name" value="RRM"/>
    <property type="match status" value="1"/>
</dbReference>
<dbReference type="SUPFAM" id="SSF54928">
    <property type="entry name" value="RNA-binding domain, RBD"/>
    <property type="match status" value="1"/>
</dbReference>
<dbReference type="PROSITE" id="PS50102">
    <property type="entry name" value="RRM"/>
    <property type="match status" value="1"/>
</dbReference>
<accession>A1A6K6</accession>
<accession>F4I435</accession>
<accession>O49280</accession>
<accession>Q8GYL1</accession>
<evidence type="ECO:0000255" key="1">
    <source>
        <dbReference type="PROSITE-ProRule" id="PRU00176"/>
    </source>
</evidence>
<evidence type="ECO:0000256" key="2">
    <source>
        <dbReference type="SAM" id="MobiDB-lite"/>
    </source>
</evidence>
<evidence type="ECO:0000269" key="3">
    <source>
    </source>
</evidence>
<evidence type="ECO:0000303" key="4">
    <source>
    </source>
</evidence>
<evidence type="ECO:0000305" key="5"/>
<evidence type="ECO:0000312" key="6">
    <source>
        <dbReference type="Araport" id="AT1G76940"/>
    </source>
</evidence>
<evidence type="ECO:0000312" key="7">
    <source>
        <dbReference type="EMBL" id="AAC00617.1"/>
    </source>
</evidence>
<evidence type="ECO:0000312" key="8">
    <source>
        <dbReference type="EMBL" id="ABL66782.1"/>
    </source>
</evidence>
<gene>
    <name evidence="4" type="primary">NSRA</name>
    <name evidence="6" type="ordered locus">At1g76940</name>
    <name evidence="7" type="ORF">F22K20.4</name>
</gene>